<gene>
    <name evidence="1" type="primary">metXS</name>
    <name type="ordered locus">Bxeno_A0074</name>
    <name type="ORF">Bxe_A4388</name>
</gene>
<sequence length="381" mass="42037">MESIGIVAPQKMHFTEPLPLQNGSSLAGYDLMVETYGTLNAARSNAVLVCHALNASHHVAGVYADNPRDIGWWDNMVGPGKPLDTDKFFVIGVNNLGSCFGSTGPMSIDPSTGNPYGATFPVVTVEDWVNAQARVADQFGITRFAAVMGGSLGGMQALAWSMMYPERVAHCIVVASTPKLSAQNIAFNEVARSAILSDPDFHGGNYYAHNVKPKRGLRVARMIGHITYLSDDDMAEKFGRSLRRAEGALDAYNFNFDVEFEVESYLRYQGDKFADYFDANTYLLITRALDYFDPAKAFAGDLTAAVAHTTAKYLIASFTTDWRFAPARSRELVKALLDHKRTVTYAEIDAPHGHDAFLLDDARYHNLMRAYYERIANEVNA</sequence>
<accession>Q146X7</accession>
<feature type="chain" id="PRO_1000021877" description="Homoserine O-succinyltransferase">
    <location>
        <begin position="1"/>
        <end position="381"/>
    </location>
</feature>
<feature type="domain" description="AB hydrolase-1" evidence="1">
    <location>
        <begin position="45"/>
        <end position="360"/>
    </location>
</feature>
<feature type="active site" description="Nucleophile" evidence="1">
    <location>
        <position position="151"/>
    </location>
</feature>
<feature type="active site" evidence="1">
    <location>
        <position position="321"/>
    </location>
</feature>
<feature type="active site" evidence="1">
    <location>
        <position position="354"/>
    </location>
</feature>
<feature type="binding site" evidence="1">
    <location>
        <position position="221"/>
    </location>
    <ligand>
        <name>substrate</name>
    </ligand>
</feature>
<feature type="binding site" evidence="1">
    <location>
        <position position="355"/>
    </location>
    <ligand>
        <name>substrate</name>
    </ligand>
</feature>
<feature type="site" description="Important for acyl-CoA specificity" evidence="1">
    <location>
        <position position="323"/>
    </location>
</feature>
<evidence type="ECO:0000255" key="1">
    <source>
        <dbReference type="HAMAP-Rule" id="MF_00296"/>
    </source>
</evidence>
<comment type="function">
    <text evidence="1">Transfers a succinyl group from succinyl-CoA to L-homoserine, forming succinyl-L-homoserine.</text>
</comment>
<comment type="catalytic activity">
    <reaction evidence="1">
        <text>L-homoserine + succinyl-CoA = O-succinyl-L-homoserine + CoA</text>
        <dbReference type="Rhea" id="RHEA:22008"/>
        <dbReference type="ChEBI" id="CHEBI:57287"/>
        <dbReference type="ChEBI" id="CHEBI:57292"/>
        <dbReference type="ChEBI" id="CHEBI:57476"/>
        <dbReference type="ChEBI" id="CHEBI:57661"/>
        <dbReference type="EC" id="2.3.1.46"/>
    </reaction>
</comment>
<comment type="pathway">
    <text evidence="1">Amino-acid biosynthesis; L-methionine biosynthesis via de novo pathway; O-succinyl-L-homoserine from L-homoserine: step 1/1.</text>
</comment>
<comment type="subunit">
    <text evidence="1">Homodimer.</text>
</comment>
<comment type="subcellular location">
    <subcellularLocation>
        <location evidence="1">Cytoplasm</location>
    </subcellularLocation>
</comment>
<comment type="similarity">
    <text evidence="1">Belongs to the AB hydrolase superfamily. MetX family.</text>
</comment>
<keyword id="KW-0012">Acyltransferase</keyword>
<keyword id="KW-0028">Amino-acid biosynthesis</keyword>
<keyword id="KW-0963">Cytoplasm</keyword>
<keyword id="KW-0486">Methionine biosynthesis</keyword>
<keyword id="KW-1185">Reference proteome</keyword>
<keyword id="KW-0808">Transferase</keyword>
<organism>
    <name type="scientific">Paraburkholderia xenovorans (strain LB400)</name>
    <dbReference type="NCBI Taxonomy" id="266265"/>
    <lineage>
        <taxon>Bacteria</taxon>
        <taxon>Pseudomonadati</taxon>
        <taxon>Pseudomonadota</taxon>
        <taxon>Betaproteobacteria</taxon>
        <taxon>Burkholderiales</taxon>
        <taxon>Burkholderiaceae</taxon>
        <taxon>Paraburkholderia</taxon>
    </lineage>
</organism>
<dbReference type="EC" id="2.3.1.46" evidence="1"/>
<dbReference type="EMBL" id="CP000270">
    <property type="protein sequence ID" value="ABE28612.1"/>
    <property type="molecule type" value="Genomic_DNA"/>
</dbReference>
<dbReference type="RefSeq" id="WP_011486468.1">
    <property type="nucleotide sequence ID" value="NC_007951.1"/>
</dbReference>
<dbReference type="SMR" id="Q146X7"/>
<dbReference type="STRING" id="266265.Bxe_A4388"/>
<dbReference type="ESTHER" id="burxl-metx">
    <property type="family name" value="Homoserine_transacetylase"/>
</dbReference>
<dbReference type="KEGG" id="bxb:DR64_2064"/>
<dbReference type="KEGG" id="bxe:Bxe_A4388"/>
<dbReference type="PATRIC" id="fig|266265.5.peg.75"/>
<dbReference type="eggNOG" id="COG2021">
    <property type="taxonomic scope" value="Bacteria"/>
</dbReference>
<dbReference type="OrthoDB" id="9800754at2"/>
<dbReference type="UniPathway" id="UPA00051">
    <property type="reaction ID" value="UER00075"/>
</dbReference>
<dbReference type="Proteomes" id="UP000001817">
    <property type="component" value="Chromosome 1"/>
</dbReference>
<dbReference type="GO" id="GO:0005737">
    <property type="term" value="C:cytoplasm"/>
    <property type="evidence" value="ECO:0007669"/>
    <property type="project" value="UniProtKB-SubCell"/>
</dbReference>
<dbReference type="GO" id="GO:0004414">
    <property type="term" value="F:homoserine O-acetyltransferase activity"/>
    <property type="evidence" value="ECO:0007669"/>
    <property type="project" value="TreeGrafter"/>
</dbReference>
<dbReference type="GO" id="GO:0008899">
    <property type="term" value="F:homoserine O-succinyltransferase activity"/>
    <property type="evidence" value="ECO:0007669"/>
    <property type="project" value="UniProtKB-UniRule"/>
</dbReference>
<dbReference type="GO" id="GO:0009092">
    <property type="term" value="P:homoserine metabolic process"/>
    <property type="evidence" value="ECO:0007669"/>
    <property type="project" value="TreeGrafter"/>
</dbReference>
<dbReference type="GO" id="GO:0009086">
    <property type="term" value="P:methionine biosynthetic process"/>
    <property type="evidence" value="ECO:0007669"/>
    <property type="project" value="UniProtKB-UniRule"/>
</dbReference>
<dbReference type="FunFam" id="1.10.1740.110:FF:000001">
    <property type="entry name" value="Homoserine O-acetyltransferase"/>
    <property type="match status" value="1"/>
</dbReference>
<dbReference type="Gene3D" id="1.10.1740.110">
    <property type="match status" value="1"/>
</dbReference>
<dbReference type="Gene3D" id="3.40.50.1820">
    <property type="entry name" value="alpha/beta hydrolase"/>
    <property type="match status" value="1"/>
</dbReference>
<dbReference type="HAMAP" id="MF_00296">
    <property type="entry name" value="MetX_acyltransf"/>
    <property type="match status" value="1"/>
</dbReference>
<dbReference type="InterPro" id="IPR000073">
    <property type="entry name" value="AB_hydrolase_1"/>
</dbReference>
<dbReference type="InterPro" id="IPR029058">
    <property type="entry name" value="AB_hydrolase_fold"/>
</dbReference>
<dbReference type="InterPro" id="IPR008220">
    <property type="entry name" value="HAT_MetX-like"/>
</dbReference>
<dbReference type="NCBIfam" id="TIGR01392">
    <property type="entry name" value="homoserO_Ac_trn"/>
    <property type="match status" value="1"/>
</dbReference>
<dbReference type="NCBIfam" id="NF001209">
    <property type="entry name" value="PRK00175.1"/>
    <property type="match status" value="1"/>
</dbReference>
<dbReference type="PANTHER" id="PTHR32268">
    <property type="entry name" value="HOMOSERINE O-ACETYLTRANSFERASE"/>
    <property type="match status" value="1"/>
</dbReference>
<dbReference type="PANTHER" id="PTHR32268:SF11">
    <property type="entry name" value="HOMOSERINE O-ACETYLTRANSFERASE"/>
    <property type="match status" value="1"/>
</dbReference>
<dbReference type="Pfam" id="PF00561">
    <property type="entry name" value="Abhydrolase_1"/>
    <property type="match status" value="1"/>
</dbReference>
<dbReference type="PIRSF" id="PIRSF000443">
    <property type="entry name" value="Homoser_Ac_trans"/>
    <property type="match status" value="1"/>
</dbReference>
<dbReference type="SUPFAM" id="SSF53474">
    <property type="entry name" value="alpha/beta-Hydrolases"/>
    <property type="match status" value="1"/>
</dbReference>
<protein>
    <recommendedName>
        <fullName evidence="1">Homoserine O-succinyltransferase</fullName>
        <shortName evidence="1">HST</shortName>
        <ecNumber evidence="1">2.3.1.46</ecNumber>
    </recommendedName>
    <alternativeName>
        <fullName evidence="1">Homoserine transsuccinylase</fullName>
        <shortName evidence="1">HTS</shortName>
    </alternativeName>
</protein>
<name>METXS_PARXL</name>
<proteinExistence type="inferred from homology"/>
<reference key="1">
    <citation type="journal article" date="2006" name="Proc. Natl. Acad. Sci. U.S.A.">
        <title>Burkholderia xenovorans LB400 harbors a multi-replicon, 9.73-Mbp genome shaped for versatility.</title>
        <authorList>
            <person name="Chain P.S.G."/>
            <person name="Denef V.J."/>
            <person name="Konstantinidis K.T."/>
            <person name="Vergez L.M."/>
            <person name="Agullo L."/>
            <person name="Reyes V.L."/>
            <person name="Hauser L."/>
            <person name="Cordova M."/>
            <person name="Gomez L."/>
            <person name="Gonzalez M."/>
            <person name="Land M."/>
            <person name="Lao V."/>
            <person name="Larimer F."/>
            <person name="LiPuma J.J."/>
            <person name="Mahenthiralingam E."/>
            <person name="Malfatti S.A."/>
            <person name="Marx C.J."/>
            <person name="Parnell J.J."/>
            <person name="Ramette A."/>
            <person name="Richardson P."/>
            <person name="Seeger M."/>
            <person name="Smith D."/>
            <person name="Spilker T."/>
            <person name="Sul W.J."/>
            <person name="Tsoi T.V."/>
            <person name="Ulrich L.E."/>
            <person name="Zhulin I.B."/>
            <person name="Tiedje J.M."/>
        </authorList>
    </citation>
    <scope>NUCLEOTIDE SEQUENCE [LARGE SCALE GENOMIC DNA]</scope>
    <source>
        <strain>LB400</strain>
    </source>
</reference>